<organism>
    <name type="scientific">Trieres chinensis</name>
    <name type="common">Marine centric diatom</name>
    <name type="synonym">Odontella sinensis</name>
    <dbReference type="NCBI Taxonomy" id="1514140"/>
    <lineage>
        <taxon>Eukaryota</taxon>
        <taxon>Sar</taxon>
        <taxon>Stramenopiles</taxon>
        <taxon>Ochrophyta</taxon>
        <taxon>Bacillariophyta</taxon>
        <taxon>Mediophyceae</taxon>
        <taxon>Biddulphiophycidae</taxon>
        <taxon>Eupodiscales</taxon>
        <taxon>Parodontellaceae</taxon>
        <taxon>Trieres</taxon>
    </lineage>
</organism>
<feature type="chain" id="PRO_0000177468" description="Large ribosomal subunit protein bL35c">
    <location>
        <begin position="1"/>
        <end position="64"/>
    </location>
</feature>
<accession>P49567</accession>
<geneLocation type="chloroplast"/>
<reference key="1">
    <citation type="journal article" date="1995" name="Plant Mol. Biol. Rep.">
        <title>The chloroplast genome of a chlorophyll a+c-containing alga, Odontella sinensis.</title>
        <authorList>
            <person name="Kowallik K.V."/>
            <person name="Stoebe B."/>
            <person name="Schaffran I."/>
            <person name="Kroth-Pancic P."/>
            <person name="Freier U."/>
        </authorList>
    </citation>
    <scope>NUCLEOTIDE SEQUENCE [LARGE SCALE GENOMIC DNA]</scope>
</reference>
<sequence length="64" mass="7515">MPKLKTRKAALKRYKKTATGKFLRRHAYKGHLLMKKSKTQKRKLSQIICVSNNDSKPIKLMLPY</sequence>
<protein>
    <recommendedName>
        <fullName evidence="1">Large ribosomal subunit protein bL35c</fullName>
    </recommendedName>
    <alternativeName>
        <fullName evidence="2">50S ribosomal protein L35, chloroplastic</fullName>
    </alternativeName>
</protein>
<gene>
    <name evidence="1" type="primary">rpl35</name>
</gene>
<evidence type="ECO:0000255" key="1">
    <source>
        <dbReference type="HAMAP-Rule" id="MF_00514"/>
    </source>
</evidence>
<evidence type="ECO:0000305" key="2"/>
<comment type="subcellular location">
    <subcellularLocation>
        <location>Plastid</location>
        <location>Chloroplast</location>
    </subcellularLocation>
</comment>
<comment type="similarity">
    <text evidence="1">Belongs to the bacterial ribosomal protein bL35 family.</text>
</comment>
<keyword id="KW-0150">Chloroplast</keyword>
<keyword id="KW-0934">Plastid</keyword>
<keyword id="KW-0687">Ribonucleoprotein</keyword>
<keyword id="KW-0689">Ribosomal protein</keyword>
<proteinExistence type="inferred from homology"/>
<name>RK35_TRICV</name>
<dbReference type="EMBL" id="Z67753">
    <property type="protein sequence ID" value="CAA91671.1"/>
    <property type="molecule type" value="Genomic_DNA"/>
</dbReference>
<dbReference type="PIR" id="S78298">
    <property type="entry name" value="S78298"/>
</dbReference>
<dbReference type="RefSeq" id="NP_043639.1">
    <property type="nucleotide sequence ID" value="NC_001713.1"/>
</dbReference>
<dbReference type="SMR" id="P49567"/>
<dbReference type="GeneID" id="801703"/>
<dbReference type="GO" id="GO:0009507">
    <property type="term" value="C:chloroplast"/>
    <property type="evidence" value="ECO:0007669"/>
    <property type="project" value="UniProtKB-SubCell"/>
</dbReference>
<dbReference type="GO" id="GO:0015934">
    <property type="term" value="C:large ribosomal subunit"/>
    <property type="evidence" value="ECO:0007669"/>
    <property type="project" value="TreeGrafter"/>
</dbReference>
<dbReference type="GO" id="GO:0003735">
    <property type="term" value="F:structural constituent of ribosome"/>
    <property type="evidence" value="ECO:0007669"/>
    <property type="project" value="InterPro"/>
</dbReference>
<dbReference type="GO" id="GO:0006412">
    <property type="term" value="P:translation"/>
    <property type="evidence" value="ECO:0007669"/>
    <property type="project" value="UniProtKB-UniRule"/>
</dbReference>
<dbReference type="FunFam" id="4.10.410.60:FF:000001">
    <property type="entry name" value="50S ribosomal protein L35"/>
    <property type="match status" value="1"/>
</dbReference>
<dbReference type="Gene3D" id="4.10.410.60">
    <property type="match status" value="1"/>
</dbReference>
<dbReference type="HAMAP" id="MF_00514">
    <property type="entry name" value="Ribosomal_bL35"/>
    <property type="match status" value="1"/>
</dbReference>
<dbReference type="InterPro" id="IPR001706">
    <property type="entry name" value="Ribosomal_bL35"/>
</dbReference>
<dbReference type="InterPro" id="IPR021137">
    <property type="entry name" value="Ribosomal_bL35-like"/>
</dbReference>
<dbReference type="InterPro" id="IPR018265">
    <property type="entry name" value="Ribosomal_bL35_CS"/>
</dbReference>
<dbReference type="InterPro" id="IPR037229">
    <property type="entry name" value="Ribosomal_bL35_sf"/>
</dbReference>
<dbReference type="NCBIfam" id="TIGR00001">
    <property type="entry name" value="rpmI_bact"/>
    <property type="match status" value="1"/>
</dbReference>
<dbReference type="PANTHER" id="PTHR33343">
    <property type="entry name" value="54S RIBOSOMAL PROTEIN BL35M"/>
    <property type="match status" value="1"/>
</dbReference>
<dbReference type="PANTHER" id="PTHR33343:SF1">
    <property type="entry name" value="LARGE RIBOSOMAL SUBUNIT PROTEIN BL35M"/>
    <property type="match status" value="1"/>
</dbReference>
<dbReference type="Pfam" id="PF01632">
    <property type="entry name" value="Ribosomal_L35p"/>
    <property type="match status" value="1"/>
</dbReference>
<dbReference type="PRINTS" id="PR00064">
    <property type="entry name" value="RIBOSOMALL35"/>
</dbReference>
<dbReference type="SUPFAM" id="SSF143034">
    <property type="entry name" value="L35p-like"/>
    <property type="match status" value="1"/>
</dbReference>
<dbReference type="PROSITE" id="PS00936">
    <property type="entry name" value="RIBOSOMAL_L35"/>
    <property type="match status" value="1"/>
</dbReference>